<name>NARF_HUMAN</name>
<comment type="subunit">
    <text evidence="2">Interacts with LMNA and binds to the farnesylated C-terminal domain.</text>
</comment>
<comment type="subcellular location">
    <subcellularLocation>
        <location evidence="2">Nucleus</location>
    </subcellularLocation>
</comment>
<comment type="alternative products">
    <event type="alternative splicing"/>
    <isoform>
        <id>Q9UHQ1-1</id>
        <name>1</name>
        <sequence type="displayed"/>
    </isoform>
    <isoform>
        <id>Q9UHQ1-2</id>
        <name>2</name>
        <sequence type="described" ref="VSP_025690"/>
    </isoform>
    <isoform>
        <id>Q9UHQ1-3</id>
        <name>3</name>
        <sequence type="described" ref="VSP_025691"/>
    </isoform>
    <isoform>
        <id>Q9UHQ1-4</id>
        <name>4</name>
        <sequence type="described" ref="VSP_046371"/>
    </isoform>
</comment>
<comment type="tissue specificity">
    <text evidence="2">Ubiquitous. Predominantly expressed in skeletal muscle, heart and brain.</text>
</comment>
<comment type="similarity">
    <text evidence="5">Belongs to the NARF family.</text>
</comment>
<accession>Q9UHQ1</accession>
<accession>A6NCJ3</accession>
<accession>B3KPX2</accession>
<accession>K4DI98</accession>
<accession>Q96AY9</accession>
<accession>Q9BWC6</accession>
<evidence type="ECO:0000256" key="1">
    <source>
        <dbReference type="SAM" id="MobiDB-lite"/>
    </source>
</evidence>
<evidence type="ECO:0000269" key="2">
    <source>
    </source>
</evidence>
<evidence type="ECO:0000303" key="3">
    <source>
    </source>
</evidence>
<evidence type="ECO:0000303" key="4">
    <source>
    </source>
</evidence>
<evidence type="ECO:0000305" key="5"/>
<evidence type="ECO:0007744" key="6">
    <source>
    </source>
</evidence>
<keyword id="KW-0025">Alternative splicing</keyword>
<keyword id="KW-0539">Nucleus</keyword>
<keyword id="KW-0597">Phosphoprotein</keyword>
<keyword id="KW-1267">Proteomics identification</keyword>
<keyword id="KW-1185">Reference proteome</keyword>
<gene>
    <name type="primary">NARF</name>
</gene>
<proteinExistence type="evidence at protein level"/>
<reference key="1">
    <citation type="journal article" date="1999" name="J. Biol. Chem.">
        <title>Prenylated prelamin A interacts with Narf, a novel nuclear protein.</title>
        <authorList>
            <person name="Barton R.M."/>
            <person name="Worman H.J."/>
        </authorList>
    </citation>
    <scope>NUCLEOTIDE SEQUENCE [MRNA] (ISOFORM 1)</scope>
    <scope>SUBCELLULAR LOCATION</scope>
    <scope>TISSUE SPECIFICITY</scope>
    <scope>INTERACTION WITH LMNA</scope>
</reference>
<reference key="2">
    <citation type="journal article" date="2004" name="Nat. Genet.">
        <title>Complete sequencing and characterization of 21,243 full-length human cDNAs.</title>
        <authorList>
            <person name="Ota T."/>
            <person name="Suzuki Y."/>
            <person name="Nishikawa T."/>
            <person name="Otsuki T."/>
            <person name="Sugiyama T."/>
            <person name="Irie R."/>
            <person name="Wakamatsu A."/>
            <person name="Hayashi K."/>
            <person name="Sato H."/>
            <person name="Nagai K."/>
            <person name="Kimura K."/>
            <person name="Makita H."/>
            <person name="Sekine M."/>
            <person name="Obayashi M."/>
            <person name="Nishi T."/>
            <person name="Shibahara T."/>
            <person name="Tanaka T."/>
            <person name="Ishii S."/>
            <person name="Yamamoto J."/>
            <person name="Saito K."/>
            <person name="Kawai Y."/>
            <person name="Isono Y."/>
            <person name="Nakamura Y."/>
            <person name="Nagahari K."/>
            <person name="Murakami K."/>
            <person name="Yasuda T."/>
            <person name="Iwayanagi T."/>
            <person name="Wagatsuma M."/>
            <person name="Shiratori A."/>
            <person name="Sudo H."/>
            <person name="Hosoiri T."/>
            <person name="Kaku Y."/>
            <person name="Kodaira H."/>
            <person name="Kondo H."/>
            <person name="Sugawara M."/>
            <person name="Takahashi M."/>
            <person name="Kanda K."/>
            <person name="Yokoi T."/>
            <person name="Furuya T."/>
            <person name="Kikkawa E."/>
            <person name="Omura Y."/>
            <person name="Abe K."/>
            <person name="Kamihara K."/>
            <person name="Katsuta N."/>
            <person name="Sato K."/>
            <person name="Tanikawa M."/>
            <person name="Yamazaki M."/>
            <person name="Ninomiya K."/>
            <person name="Ishibashi T."/>
            <person name="Yamashita H."/>
            <person name="Murakawa K."/>
            <person name="Fujimori K."/>
            <person name="Tanai H."/>
            <person name="Kimata M."/>
            <person name="Watanabe M."/>
            <person name="Hiraoka S."/>
            <person name="Chiba Y."/>
            <person name="Ishida S."/>
            <person name="Ono Y."/>
            <person name="Takiguchi S."/>
            <person name="Watanabe S."/>
            <person name="Yosida M."/>
            <person name="Hotuta T."/>
            <person name="Kusano J."/>
            <person name="Kanehori K."/>
            <person name="Takahashi-Fujii A."/>
            <person name="Hara H."/>
            <person name="Tanase T.-O."/>
            <person name="Nomura Y."/>
            <person name="Togiya S."/>
            <person name="Komai F."/>
            <person name="Hara R."/>
            <person name="Takeuchi K."/>
            <person name="Arita M."/>
            <person name="Imose N."/>
            <person name="Musashino K."/>
            <person name="Yuuki H."/>
            <person name="Oshima A."/>
            <person name="Sasaki N."/>
            <person name="Aotsuka S."/>
            <person name="Yoshikawa Y."/>
            <person name="Matsunawa H."/>
            <person name="Ichihara T."/>
            <person name="Shiohata N."/>
            <person name="Sano S."/>
            <person name="Moriya S."/>
            <person name="Momiyama H."/>
            <person name="Satoh N."/>
            <person name="Takami S."/>
            <person name="Terashima Y."/>
            <person name="Suzuki O."/>
            <person name="Nakagawa S."/>
            <person name="Senoh A."/>
            <person name="Mizoguchi H."/>
            <person name="Goto Y."/>
            <person name="Shimizu F."/>
            <person name="Wakebe H."/>
            <person name="Hishigaki H."/>
            <person name="Watanabe T."/>
            <person name="Sugiyama A."/>
            <person name="Takemoto M."/>
            <person name="Kawakami B."/>
            <person name="Yamazaki M."/>
            <person name="Watanabe K."/>
            <person name="Kumagai A."/>
            <person name="Itakura S."/>
            <person name="Fukuzumi Y."/>
            <person name="Fujimori Y."/>
            <person name="Komiyama M."/>
            <person name="Tashiro H."/>
            <person name="Tanigami A."/>
            <person name="Fujiwara T."/>
            <person name="Ono T."/>
            <person name="Yamada K."/>
            <person name="Fujii Y."/>
            <person name="Ozaki K."/>
            <person name="Hirao M."/>
            <person name="Ohmori Y."/>
            <person name="Kawabata A."/>
            <person name="Hikiji T."/>
            <person name="Kobatake N."/>
            <person name="Inagaki H."/>
            <person name="Ikema Y."/>
            <person name="Okamoto S."/>
            <person name="Okitani R."/>
            <person name="Kawakami T."/>
            <person name="Noguchi S."/>
            <person name="Itoh T."/>
            <person name="Shigeta K."/>
            <person name="Senba T."/>
            <person name="Matsumura K."/>
            <person name="Nakajima Y."/>
            <person name="Mizuno T."/>
            <person name="Morinaga M."/>
            <person name="Sasaki M."/>
            <person name="Togashi T."/>
            <person name="Oyama M."/>
            <person name="Hata H."/>
            <person name="Watanabe M."/>
            <person name="Komatsu T."/>
            <person name="Mizushima-Sugano J."/>
            <person name="Satoh T."/>
            <person name="Shirai Y."/>
            <person name="Takahashi Y."/>
            <person name="Nakagawa K."/>
            <person name="Okumura K."/>
            <person name="Nagase T."/>
            <person name="Nomura N."/>
            <person name="Kikuchi H."/>
            <person name="Masuho Y."/>
            <person name="Yamashita R."/>
            <person name="Nakai K."/>
            <person name="Yada T."/>
            <person name="Nakamura Y."/>
            <person name="Ohara O."/>
            <person name="Isogai T."/>
            <person name="Sugano S."/>
        </authorList>
    </citation>
    <scope>NUCLEOTIDE SEQUENCE [LARGE SCALE MRNA] (ISOFORMS 1 AND 4)</scope>
    <source>
        <tissue>Embryo</tissue>
        <tissue>Skeletal muscle</tissue>
    </source>
</reference>
<reference key="3">
    <citation type="journal article" date="2006" name="Nature">
        <title>DNA sequence of human chromosome 17 and analysis of rearrangement in the human lineage.</title>
        <authorList>
            <person name="Zody M.C."/>
            <person name="Garber M."/>
            <person name="Adams D.J."/>
            <person name="Sharpe T."/>
            <person name="Harrow J."/>
            <person name="Lupski J.R."/>
            <person name="Nicholson C."/>
            <person name="Searle S.M."/>
            <person name="Wilming L."/>
            <person name="Young S.K."/>
            <person name="Abouelleil A."/>
            <person name="Allen N.R."/>
            <person name="Bi W."/>
            <person name="Bloom T."/>
            <person name="Borowsky M.L."/>
            <person name="Bugalter B.E."/>
            <person name="Butler J."/>
            <person name="Chang J.L."/>
            <person name="Chen C.-K."/>
            <person name="Cook A."/>
            <person name="Corum B."/>
            <person name="Cuomo C.A."/>
            <person name="de Jong P.J."/>
            <person name="DeCaprio D."/>
            <person name="Dewar K."/>
            <person name="FitzGerald M."/>
            <person name="Gilbert J."/>
            <person name="Gibson R."/>
            <person name="Gnerre S."/>
            <person name="Goldstein S."/>
            <person name="Grafham D.V."/>
            <person name="Grocock R."/>
            <person name="Hafez N."/>
            <person name="Hagopian D.S."/>
            <person name="Hart E."/>
            <person name="Norman C.H."/>
            <person name="Humphray S."/>
            <person name="Jaffe D.B."/>
            <person name="Jones M."/>
            <person name="Kamal M."/>
            <person name="Khodiyar V.K."/>
            <person name="LaButti K."/>
            <person name="Laird G."/>
            <person name="Lehoczky J."/>
            <person name="Liu X."/>
            <person name="Lokyitsang T."/>
            <person name="Loveland J."/>
            <person name="Lui A."/>
            <person name="Macdonald P."/>
            <person name="Major J.E."/>
            <person name="Matthews L."/>
            <person name="Mauceli E."/>
            <person name="McCarroll S.A."/>
            <person name="Mihalev A.H."/>
            <person name="Mudge J."/>
            <person name="Nguyen C."/>
            <person name="Nicol R."/>
            <person name="O'Leary S.B."/>
            <person name="Osoegawa K."/>
            <person name="Schwartz D.C."/>
            <person name="Shaw-Smith C."/>
            <person name="Stankiewicz P."/>
            <person name="Steward C."/>
            <person name="Swarbreck D."/>
            <person name="Venkataraman V."/>
            <person name="Whittaker C.A."/>
            <person name="Yang X."/>
            <person name="Zimmer A.R."/>
            <person name="Bradley A."/>
            <person name="Hubbard T."/>
            <person name="Birren B.W."/>
            <person name="Rogers J."/>
            <person name="Lander E.S."/>
            <person name="Nusbaum C."/>
        </authorList>
    </citation>
    <scope>NUCLEOTIDE SEQUENCE [LARGE SCALE GENOMIC DNA]</scope>
</reference>
<reference key="4">
    <citation type="submission" date="2005-07" db="EMBL/GenBank/DDBJ databases">
        <authorList>
            <person name="Mural R.J."/>
            <person name="Istrail S."/>
            <person name="Sutton G.G."/>
            <person name="Florea L."/>
            <person name="Halpern A.L."/>
            <person name="Mobarry C.M."/>
            <person name="Lippert R."/>
            <person name="Walenz B."/>
            <person name="Shatkay H."/>
            <person name="Dew I."/>
            <person name="Miller J.R."/>
            <person name="Flanigan M.J."/>
            <person name="Edwards N.J."/>
            <person name="Bolanos R."/>
            <person name="Fasulo D."/>
            <person name="Halldorsson B.V."/>
            <person name="Hannenhalli S."/>
            <person name="Turner R."/>
            <person name="Yooseph S."/>
            <person name="Lu F."/>
            <person name="Nusskern D.R."/>
            <person name="Shue B.C."/>
            <person name="Zheng X.H."/>
            <person name="Zhong F."/>
            <person name="Delcher A.L."/>
            <person name="Huson D.H."/>
            <person name="Kravitz S.A."/>
            <person name="Mouchard L."/>
            <person name="Reinert K."/>
            <person name="Remington K.A."/>
            <person name="Clark A.G."/>
            <person name="Waterman M.S."/>
            <person name="Eichler E.E."/>
            <person name="Adams M.D."/>
            <person name="Hunkapiller M.W."/>
            <person name="Myers E.W."/>
            <person name="Venter J.C."/>
        </authorList>
    </citation>
    <scope>NUCLEOTIDE SEQUENCE [LARGE SCALE GENOMIC DNA]</scope>
</reference>
<reference key="5">
    <citation type="journal article" date="2004" name="Genome Res.">
        <title>The status, quality, and expansion of the NIH full-length cDNA project: the Mammalian Gene Collection (MGC).</title>
        <authorList>
            <consortium name="The MGC Project Team"/>
        </authorList>
    </citation>
    <scope>NUCLEOTIDE SEQUENCE [LARGE SCALE MRNA] (ISOFORMS 2 AND 3)</scope>
    <source>
        <tissue>Lung</tissue>
        <tissue>Placenta</tissue>
    </source>
</reference>
<reference key="6">
    <citation type="journal article" date="2013" name="J. Proteome Res.">
        <title>Toward a comprehensive characterization of a human cancer cell phosphoproteome.</title>
        <authorList>
            <person name="Zhou H."/>
            <person name="Di Palma S."/>
            <person name="Preisinger C."/>
            <person name="Peng M."/>
            <person name="Polat A.N."/>
            <person name="Heck A.J."/>
            <person name="Mohammed S."/>
        </authorList>
    </citation>
    <scope>PHOSPHORYLATION [LARGE SCALE ANALYSIS] AT SER-29</scope>
    <scope>IDENTIFICATION BY MASS SPECTROMETRY [LARGE SCALE ANALYSIS]</scope>
    <source>
        <tissue>Erythroleukemia</tissue>
    </source>
</reference>
<organism>
    <name type="scientific">Homo sapiens</name>
    <name type="common">Human</name>
    <dbReference type="NCBI Taxonomy" id="9606"/>
    <lineage>
        <taxon>Eukaryota</taxon>
        <taxon>Metazoa</taxon>
        <taxon>Chordata</taxon>
        <taxon>Craniata</taxon>
        <taxon>Vertebrata</taxon>
        <taxon>Euteleostomi</taxon>
        <taxon>Mammalia</taxon>
        <taxon>Eutheria</taxon>
        <taxon>Euarchontoglires</taxon>
        <taxon>Primates</taxon>
        <taxon>Haplorrhini</taxon>
        <taxon>Catarrhini</taxon>
        <taxon>Hominidae</taxon>
        <taxon>Homo</taxon>
    </lineage>
</organism>
<sequence length="456" mass="51156">MKCEHCTRKECSKKTKTDDQENVSADAPSPAQENGEKGEFHKLADAKIFLSDCLACDSCMTAEEGVQLSQQNAKDFFRVLNLNKKCDTSKHKVLVVSVCPQSLPYFAAKFNLSVTDASRRLCGFLKSLGVHYVFDTTIAADFSILESQKEFVRRYRQHSEEERTLPMLTSACPGWVRYAERVLGRPITAHLCTAKSPQQVMGSLVKDYFARQQNLSPEKIFHVIVAPCYDKKLEALQESLPPALHGSRGADCVLTSGEIAQIMEQGDLSVRDAAVDTLFGDLKEDKVTRHDGASSDGHLAHIFRHAAKELFNEDVEEVTYRALRNKDFQEVTLEKNGEVVLRFAAAYGFRNIQNMILKLKKGKFPFHFVEVLACAGGCLNGRGQAQTPDGHADKALLRQMEGIYADIPVRRPESSAHVQELYQEWLEGINSPKAREVLHTTYQSQERGTHSLDIKW</sequence>
<feature type="chain" id="PRO_0000288479" description="Nuclear prelamin A recognition factor">
    <location>
        <begin position="1"/>
        <end position="456"/>
    </location>
</feature>
<feature type="region of interest" description="Disordered" evidence="1">
    <location>
        <begin position="1"/>
        <end position="36"/>
    </location>
</feature>
<feature type="compositionally biased region" description="Basic and acidic residues" evidence="1">
    <location>
        <begin position="1"/>
        <end position="19"/>
    </location>
</feature>
<feature type="modified residue" description="Phosphoserine" evidence="6">
    <location>
        <position position="29"/>
    </location>
</feature>
<feature type="splice variant" id="VSP_046371" description="In isoform 4." evidence="3">
    <location>
        <begin position="1"/>
        <end position="59"/>
    </location>
</feature>
<feature type="splice variant" id="VSP_025691" description="In isoform 3." evidence="4">
    <location>
        <begin position="38"/>
        <end position="85"/>
    </location>
</feature>
<feature type="splice variant" id="VSP_025690" description="In isoform 2." evidence="4">
    <original>S</original>
    <variation>SEISQAWWCTPVITATREAAARESLEPGRQRLQRDKIAPLDSSLGGG</variation>
    <location>
        <position position="256"/>
    </location>
</feature>
<feature type="sequence conflict" description="In Ref. 2; BAG51834." evidence="5" ref="2">
    <original>R</original>
    <variation>L</variation>
    <location>
        <position position="154"/>
    </location>
</feature>
<protein>
    <recommendedName>
        <fullName>Nuclear prelamin A recognition factor</fullName>
    </recommendedName>
    <alternativeName>
        <fullName>Iron-only hydrogenase-like protein 2</fullName>
        <shortName>IOP2</shortName>
    </alternativeName>
</protein>
<dbReference type="EMBL" id="AF128406">
    <property type="protein sequence ID" value="AAD51446.1"/>
    <property type="molecule type" value="mRNA"/>
</dbReference>
<dbReference type="EMBL" id="AK000929">
    <property type="protein sequence ID" value="BAA91432.1"/>
    <property type="molecule type" value="mRNA"/>
</dbReference>
<dbReference type="EMBL" id="AK056966">
    <property type="protein sequence ID" value="BAG51834.1"/>
    <property type="molecule type" value="mRNA"/>
</dbReference>
<dbReference type="EMBL" id="AC124287">
    <property type="status" value="NOT_ANNOTATED_CDS"/>
    <property type="molecule type" value="Genomic_DNA"/>
</dbReference>
<dbReference type="EMBL" id="AC132938">
    <property type="status" value="NOT_ANNOTATED_CDS"/>
    <property type="molecule type" value="Genomic_DNA"/>
</dbReference>
<dbReference type="EMBL" id="CH471099">
    <property type="protein sequence ID" value="EAW89794.1"/>
    <property type="molecule type" value="Genomic_DNA"/>
</dbReference>
<dbReference type="EMBL" id="CH471099">
    <property type="protein sequence ID" value="EAW89798.1"/>
    <property type="molecule type" value="Genomic_DNA"/>
</dbReference>
<dbReference type="EMBL" id="BC000438">
    <property type="protein sequence ID" value="AAH00438.1"/>
    <property type="molecule type" value="mRNA"/>
</dbReference>
<dbReference type="EMBL" id="BC016440">
    <property type="protein sequence ID" value="AAH16440.1"/>
    <property type="molecule type" value="mRNA"/>
</dbReference>
<dbReference type="CCDS" id="CCDS32777.1">
    <molecule id="Q9UHQ1-1"/>
</dbReference>
<dbReference type="CCDS" id="CCDS42403.1">
    <molecule id="Q9UHQ1-3"/>
</dbReference>
<dbReference type="CCDS" id="CCDS42404.1">
    <molecule id="Q9UHQ1-4"/>
</dbReference>
<dbReference type="RefSeq" id="NP_001033707.1">
    <molecule id="Q9UHQ1-4"/>
    <property type="nucleotide sequence ID" value="NM_001038618.3"/>
</dbReference>
<dbReference type="RefSeq" id="NP_001077077.1">
    <molecule id="Q9UHQ1-3"/>
    <property type="nucleotide sequence ID" value="NM_001083608.2"/>
</dbReference>
<dbReference type="RefSeq" id="NP_036468.1">
    <molecule id="Q9UHQ1-1"/>
    <property type="nucleotide sequence ID" value="NM_012336.4"/>
</dbReference>
<dbReference type="RefSeq" id="NP_114174.1">
    <molecule id="Q9UHQ1-2"/>
    <property type="nucleotide sequence ID" value="NM_031968.2"/>
</dbReference>
<dbReference type="RefSeq" id="XP_005256397.1">
    <molecule id="Q9UHQ1-4"/>
    <property type="nucleotide sequence ID" value="XM_005256340.5"/>
</dbReference>
<dbReference type="RefSeq" id="XP_011521843.1">
    <molecule id="Q9UHQ1-4"/>
    <property type="nucleotide sequence ID" value="XM_011523541.3"/>
</dbReference>
<dbReference type="RefSeq" id="XP_054171690.1">
    <molecule id="Q9UHQ1-4"/>
    <property type="nucleotide sequence ID" value="XM_054315715.1"/>
</dbReference>
<dbReference type="RefSeq" id="XP_054171691.1">
    <molecule id="Q9UHQ1-4"/>
    <property type="nucleotide sequence ID" value="XM_054315716.1"/>
</dbReference>
<dbReference type="SMR" id="Q9UHQ1"/>
<dbReference type="BioGRID" id="117709">
    <property type="interactions" value="29"/>
</dbReference>
<dbReference type="FunCoup" id="Q9UHQ1">
    <property type="interactions" value="1958"/>
</dbReference>
<dbReference type="IntAct" id="Q9UHQ1">
    <property type="interactions" value="23"/>
</dbReference>
<dbReference type="MINT" id="Q9UHQ1"/>
<dbReference type="STRING" id="9606.ENSP00000309899"/>
<dbReference type="iPTMnet" id="Q9UHQ1"/>
<dbReference type="PhosphoSitePlus" id="Q9UHQ1"/>
<dbReference type="BioMuta" id="NARF"/>
<dbReference type="DMDM" id="74735021"/>
<dbReference type="jPOST" id="Q9UHQ1"/>
<dbReference type="MassIVE" id="Q9UHQ1"/>
<dbReference type="PaxDb" id="9606-ENSP00000309899"/>
<dbReference type="PeptideAtlas" id="Q9UHQ1"/>
<dbReference type="ProteomicsDB" id="84396">
    <molecule id="Q9UHQ1-1"/>
</dbReference>
<dbReference type="ProteomicsDB" id="84397">
    <molecule id="Q9UHQ1-2"/>
</dbReference>
<dbReference type="ProteomicsDB" id="84398">
    <molecule id="Q9UHQ1-3"/>
</dbReference>
<dbReference type="Pumba" id="Q9UHQ1"/>
<dbReference type="Antibodypedia" id="33014">
    <property type="antibodies" value="190 antibodies from 28 providers"/>
</dbReference>
<dbReference type="DNASU" id="26502"/>
<dbReference type="Ensembl" id="ENST00000309794.16">
    <molecule id="Q9UHQ1-1"/>
    <property type="protein sequence ID" value="ENSP00000309899.10"/>
    <property type="gene ID" value="ENSG00000141562.19"/>
</dbReference>
<dbReference type="Ensembl" id="ENST00000345415.11">
    <molecule id="Q9UHQ1-3"/>
    <property type="protein sequence ID" value="ENSP00000283996.9"/>
    <property type="gene ID" value="ENSG00000141562.19"/>
</dbReference>
<dbReference type="Ensembl" id="ENST00000390006.8">
    <molecule id="Q9UHQ1-4"/>
    <property type="protein sequence ID" value="ENSP00000374656.4"/>
    <property type="gene ID" value="ENSG00000141562.19"/>
</dbReference>
<dbReference type="GeneID" id="26502"/>
<dbReference type="KEGG" id="hsa:26502"/>
<dbReference type="MANE-Select" id="ENST00000309794.16">
    <property type="protein sequence ID" value="ENSP00000309899.10"/>
    <property type="RefSeq nucleotide sequence ID" value="NM_012336.4"/>
    <property type="RefSeq protein sequence ID" value="NP_036468.1"/>
</dbReference>
<dbReference type="UCSC" id="uc002kff.5">
    <molecule id="Q9UHQ1-1"/>
    <property type="organism name" value="human"/>
</dbReference>
<dbReference type="AGR" id="HGNC:29916"/>
<dbReference type="CTD" id="26502"/>
<dbReference type="DisGeNET" id="26502"/>
<dbReference type="GeneCards" id="NARF"/>
<dbReference type="HGNC" id="HGNC:29916">
    <property type="gene designation" value="NARF"/>
</dbReference>
<dbReference type="HPA" id="ENSG00000141562">
    <property type="expression patterns" value="Low tissue specificity"/>
</dbReference>
<dbReference type="MIM" id="605349">
    <property type="type" value="gene"/>
</dbReference>
<dbReference type="neXtProt" id="NX_Q9UHQ1"/>
<dbReference type="OpenTargets" id="ENSG00000141562"/>
<dbReference type="PharmGKB" id="PA142671294"/>
<dbReference type="VEuPathDB" id="HostDB:ENSG00000141562"/>
<dbReference type="eggNOG" id="KOG2439">
    <property type="taxonomic scope" value="Eukaryota"/>
</dbReference>
<dbReference type="GeneTree" id="ENSGT00940000153514"/>
<dbReference type="HOGENOM" id="CLU_018240_0_0_1"/>
<dbReference type="InParanoid" id="Q9UHQ1"/>
<dbReference type="OrthoDB" id="10253113at2759"/>
<dbReference type="PAN-GO" id="Q9UHQ1">
    <property type="GO annotations" value="2 GO annotations based on evolutionary models"/>
</dbReference>
<dbReference type="PhylomeDB" id="Q9UHQ1"/>
<dbReference type="TreeFam" id="TF106273"/>
<dbReference type="PathwayCommons" id="Q9UHQ1"/>
<dbReference type="SignaLink" id="Q9UHQ1"/>
<dbReference type="BioGRID-ORCS" id="26502">
    <property type="hits" value="14 hits in 1163 CRISPR screens"/>
</dbReference>
<dbReference type="ChiTaRS" id="NARF">
    <property type="organism name" value="human"/>
</dbReference>
<dbReference type="GeneWiki" id="NARF"/>
<dbReference type="GenomeRNAi" id="26502"/>
<dbReference type="Pharos" id="Q9UHQ1">
    <property type="development level" value="Tbio"/>
</dbReference>
<dbReference type="PRO" id="PR:Q9UHQ1"/>
<dbReference type="Proteomes" id="UP000005640">
    <property type="component" value="Chromosome 17"/>
</dbReference>
<dbReference type="RNAct" id="Q9UHQ1">
    <property type="molecule type" value="protein"/>
</dbReference>
<dbReference type="Bgee" id="ENSG00000141562">
    <property type="expression patterns" value="Expressed in left testis and 198 other cell types or tissues"/>
</dbReference>
<dbReference type="ExpressionAtlas" id="Q9UHQ1">
    <property type="expression patterns" value="baseline and differential"/>
</dbReference>
<dbReference type="GO" id="GO:0005638">
    <property type="term" value="C:lamin filament"/>
    <property type="evidence" value="ECO:0000314"/>
    <property type="project" value="HGNC-UCL"/>
</dbReference>
<dbReference type="GO" id="GO:0005652">
    <property type="term" value="C:nuclear lamina"/>
    <property type="evidence" value="ECO:0000304"/>
    <property type="project" value="ProtInc"/>
</dbReference>
<dbReference type="GO" id="GO:0031981">
    <property type="term" value="C:nuclear lumen"/>
    <property type="evidence" value="ECO:0000314"/>
    <property type="project" value="HGNC-UCL"/>
</dbReference>
<dbReference type="GO" id="GO:0005730">
    <property type="term" value="C:nucleolus"/>
    <property type="evidence" value="ECO:0000314"/>
    <property type="project" value="HPA"/>
</dbReference>
<dbReference type="GO" id="GO:0005654">
    <property type="term" value="C:nucleoplasm"/>
    <property type="evidence" value="ECO:0000314"/>
    <property type="project" value="HPA"/>
</dbReference>
<dbReference type="GO" id="GO:0005521">
    <property type="term" value="F:lamin binding"/>
    <property type="evidence" value="ECO:0000353"/>
    <property type="project" value="HGNC-UCL"/>
</dbReference>
<dbReference type="FunFam" id="3.40.50.1780:FF:000019">
    <property type="entry name" value="Cytosolic Fe-S cluster assembly factor NAR1"/>
    <property type="match status" value="1"/>
</dbReference>
<dbReference type="Gene3D" id="3.40.50.1780">
    <property type="match status" value="1"/>
</dbReference>
<dbReference type="Gene3D" id="3.40.950.10">
    <property type="entry name" value="Fe-only Hydrogenase (Larger Subunit), Chain L, domain 3"/>
    <property type="match status" value="1"/>
</dbReference>
<dbReference type="InterPro" id="IPR050340">
    <property type="entry name" value="Cytosolic_Fe-S_CAF"/>
</dbReference>
<dbReference type="InterPro" id="IPR009016">
    <property type="entry name" value="Fe_hydrogenase"/>
</dbReference>
<dbReference type="InterPro" id="IPR004108">
    <property type="entry name" value="Fe_hydrogenase_lsu_C"/>
</dbReference>
<dbReference type="InterPro" id="IPR003149">
    <property type="entry name" value="Fe_hydrogenase_ssu"/>
</dbReference>
<dbReference type="PANTHER" id="PTHR11615">
    <property type="entry name" value="NITRATE, FORMATE, IRON DEHYDROGENASE"/>
    <property type="match status" value="1"/>
</dbReference>
<dbReference type="Pfam" id="PF02906">
    <property type="entry name" value="Fe_hyd_lg_C"/>
    <property type="match status" value="1"/>
</dbReference>
<dbReference type="Pfam" id="PF02256">
    <property type="entry name" value="Fe_hyd_SSU"/>
    <property type="match status" value="1"/>
</dbReference>
<dbReference type="SMART" id="SM00902">
    <property type="entry name" value="Fe_hyd_SSU"/>
    <property type="match status" value="1"/>
</dbReference>
<dbReference type="SUPFAM" id="SSF53920">
    <property type="entry name" value="Fe-only hydrogenase"/>
    <property type="match status" value="1"/>
</dbReference>